<accession>P51359</accession>
<proteinExistence type="inferred from homology"/>
<comment type="function">
    <text evidence="1">Binds together with bS18 to 16S ribosomal RNA.</text>
</comment>
<comment type="subcellular location">
    <subcellularLocation>
        <location>Plastid</location>
        <location>Chloroplast</location>
    </subcellularLocation>
</comment>
<comment type="similarity">
    <text evidence="2">Belongs to the bacterial ribosomal protein bS6 family.</text>
</comment>
<geneLocation type="chloroplast"/>
<sequence>MLQTKNSQEIKLNWYETVYLIKSDLNEDRTLCIINEYKSMLTNGGAKNIILQHRGRRHLSYSIKDYRDGIYVQVNYEGNGKLVQSFEKSLRFDENIIRYLTNKQNKDNKIEG</sequence>
<feature type="chain" id="PRO_0000176890" description="Small ribosomal subunit protein bS6c">
    <location>
        <begin position="1"/>
        <end position="112"/>
    </location>
</feature>
<dbReference type="EMBL" id="U38804">
    <property type="protein sequence ID" value="AAC08245.1"/>
    <property type="molecule type" value="Genomic_DNA"/>
</dbReference>
<dbReference type="PIR" id="S73280">
    <property type="entry name" value="S73280"/>
</dbReference>
<dbReference type="RefSeq" id="NP_053969.1">
    <property type="nucleotide sequence ID" value="NC_000925.1"/>
</dbReference>
<dbReference type="SMR" id="P51359"/>
<dbReference type="GeneID" id="809998"/>
<dbReference type="GO" id="GO:0009507">
    <property type="term" value="C:chloroplast"/>
    <property type="evidence" value="ECO:0007669"/>
    <property type="project" value="UniProtKB-SubCell"/>
</dbReference>
<dbReference type="GO" id="GO:1990904">
    <property type="term" value="C:ribonucleoprotein complex"/>
    <property type="evidence" value="ECO:0007669"/>
    <property type="project" value="UniProtKB-KW"/>
</dbReference>
<dbReference type="GO" id="GO:0005840">
    <property type="term" value="C:ribosome"/>
    <property type="evidence" value="ECO:0007669"/>
    <property type="project" value="UniProtKB-KW"/>
</dbReference>
<dbReference type="GO" id="GO:0070181">
    <property type="term" value="F:small ribosomal subunit rRNA binding"/>
    <property type="evidence" value="ECO:0007669"/>
    <property type="project" value="TreeGrafter"/>
</dbReference>
<dbReference type="GO" id="GO:0003735">
    <property type="term" value="F:structural constituent of ribosome"/>
    <property type="evidence" value="ECO:0007669"/>
    <property type="project" value="InterPro"/>
</dbReference>
<dbReference type="GO" id="GO:0006412">
    <property type="term" value="P:translation"/>
    <property type="evidence" value="ECO:0007669"/>
    <property type="project" value="UniProtKB-UniRule"/>
</dbReference>
<dbReference type="CDD" id="cd15487">
    <property type="entry name" value="bS6_chloro_cyano"/>
    <property type="match status" value="1"/>
</dbReference>
<dbReference type="Gene3D" id="3.30.70.60">
    <property type="match status" value="1"/>
</dbReference>
<dbReference type="HAMAP" id="MF_00360">
    <property type="entry name" value="Ribosomal_bS6"/>
    <property type="match status" value="1"/>
</dbReference>
<dbReference type="InterPro" id="IPR000529">
    <property type="entry name" value="Ribosomal_bS6"/>
</dbReference>
<dbReference type="InterPro" id="IPR020815">
    <property type="entry name" value="Ribosomal_bS6_CS"/>
</dbReference>
<dbReference type="InterPro" id="IPR035980">
    <property type="entry name" value="Ribosomal_bS6_sf"/>
</dbReference>
<dbReference type="InterPro" id="IPR020814">
    <property type="entry name" value="Ribosomal_S6_plastid/chlpt"/>
</dbReference>
<dbReference type="InterPro" id="IPR014717">
    <property type="entry name" value="Transl_elong_EF1B/ribsomal_bS6"/>
</dbReference>
<dbReference type="NCBIfam" id="TIGR00166">
    <property type="entry name" value="S6"/>
    <property type="match status" value="1"/>
</dbReference>
<dbReference type="PANTHER" id="PTHR21011">
    <property type="entry name" value="MITOCHONDRIAL 28S RIBOSOMAL PROTEIN S6"/>
    <property type="match status" value="1"/>
</dbReference>
<dbReference type="PANTHER" id="PTHR21011:SF1">
    <property type="entry name" value="SMALL RIBOSOMAL SUBUNIT PROTEIN BS6M"/>
    <property type="match status" value="1"/>
</dbReference>
<dbReference type="Pfam" id="PF01250">
    <property type="entry name" value="Ribosomal_S6"/>
    <property type="match status" value="1"/>
</dbReference>
<dbReference type="SUPFAM" id="SSF54995">
    <property type="entry name" value="Ribosomal protein S6"/>
    <property type="match status" value="1"/>
</dbReference>
<dbReference type="PROSITE" id="PS01048">
    <property type="entry name" value="RIBOSOMAL_S6"/>
    <property type="match status" value="1"/>
</dbReference>
<organism>
    <name type="scientific">Porphyra purpurea</name>
    <name type="common">Red seaweed</name>
    <name type="synonym">Ulva purpurea</name>
    <dbReference type="NCBI Taxonomy" id="2787"/>
    <lineage>
        <taxon>Eukaryota</taxon>
        <taxon>Rhodophyta</taxon>
        <taxon>Bangiophyceae</taxon>
        <taxon>Bangiales</taxon>
        <taxon>Bangiaceae</taxon>
        <taxon>Porphyra</taxon>
    </lineage>
</organism>
<keyword id="KW-0150">Chloroplast</keyword>
<keyword id="KW-0934">Plastid</keyword>
<keyword id="KW-0687">Ribonucleoprotein</keyword>
<keyword id="KW-0689">Ribosomal protein</keyword>
<keyword id="KW-0694">RNA-binding</keyword>
<keyword id="KW-0699">rRNA-binding</keyword>
<protein>
    <recommendedName>
        <fullName evidence="2">Small ribosomal subunit protein bS6c</fullName>
    </recommendedName>
    <alternativeName>
        <fullName>30S ribosomal protein S6, chloroplastic</fullName>
    </alternativeName>
</protein>
<evidence type="ECO:0000250" key="1"/>
<evidence type="ECO:0000305" key="2"/>
<reference key="1">
    <citation type="journal article" date="1995" name="Plant Mol. Biol. Rep.">
        <title>Complete nucleotide sequence of the Porphyra purpurea chloroplast genome.</title>
        <authorList>
            <person name="Reith M.E."/>
            <person name="Munholland J."/>
        </authorList>
    </citation>
    <scope>NUCLEOTIDE SEQUENCE [LARGE SCALE GENOMIC DNA]</scope>
    <source>
        <strain>Avonport</strain>
    </source>
</reference>
<name>RR6_PORPU</name>
<gene>
    <name type="primary">rps6</name>
</gene>